<keyword id="KW-1003">Cell membrane</keyword>
<keyword id="KW-0391">Immunity</keyword>
<keyword id="KW-0393">Immunoglobulin domain</keyword>
<keyword id="KW-0472">Membrane</keyword>
<keyword id="KW-0675">Receptor</keyword>
<keyword id="KW-1185">Reference proteome</keyword>
<keyword id="KW-0732">Signal</keyword>
<keyword id="KW-0812">Transmembrane</keyword>
<keyword id="KW-1133">Transmembrane helix</keyword>
<dbReference type="EMBL" id="Y08917">
    <property type="protein sequence ID" value="CAA70121.1"/>
    <property type="molecule type" value="mRNA"/>
</dbReference>
<dbReference type="SMR" id="Q98910"/>
<dbReference type="FunCoup" id="Q98910">
    <property type="interactions" value="85"/>
</dbReference>
<dbReference type="STRING" id="9031.ENSGALP00000011982"/>
<dbReference type="PaxDb" id="9031-ENSGALP00000011982"/>
<dbReference type="VEuPathDB" id="HostDB:geneid_396062"/>
<dbReference type="eggNOG" id="ENOG502S8KB">
    <property type="taxonomic scope" value="Eukaryota"/>
</dbReference>
<dbReference type="InParanoid" id="Q98910"/>
<dbReference type="OrthoDB" id="9947847at2759"/>
<dbReference type="PhylomeDB" id="Q98910"/>
<dbReference type="Proteomes" id="UP000000539">
    <property type="component" value="Unassembled WGS sequence"/>
</dbReference>
<dbReference type="GO" id="GO:0042105">
    <property type="term" value="C:alpha-beta T cell receptor complex"/>
    <property type="evidence" value="ECO:0000318"/>
    <property type="project" value="GO_Central"/>
</dbReference>
<dbReference type="GO" id="GO:0009897">
    <property type="term" value="C:external side of plasma membrane"/>
    <property type="evidence" value="ECO:0000318"/>
    <property type="project" value="GO_Central"/>
</dbReference>
<dbReference type="GO" id="GO:0004888">
    <property type="term" value="F:transmembrane signaling receptor activity"/>
    <property type="evidence" value="ECO:0000318"/>
    <property type="project" value="GO_Central"/>
</dbReference>
<dbReference type="GO" id="GO:0007166">
    <property type="term" value="P:cell surface receptor signaling pathway"/>
    <property type="evidence" value="ECO:0000318"/>
    <property type="project" value="GO_Central"/>
</dbReference>
<dbReference type="GO" id="GO:0045059">
    <property type="term" value="P:positive thymic T cell selection"/>
    <property type="evidence" value="ECO:0000318"/>
    <property type="project" value="GO_Central"/>
</dbReference>
<dbReference type="CDD" id="cd20933">
    <property type="entry name" value="Ig_ch-CD3_epsilon_like"/>
    <property type="match status" value="1"/>
</dbReference>
<dbReference type="FunFam" id="2.60.40.10:FF:003203">
    <property type="match status" value="1"/>
</dbReference>
<dbReference type="Gene3D" id="2.60.40.10">
    <property type="entry name" value="Immunoglobulins"/>
    <property type="match status" value="1"/>
</dbReference>
<dbReference type="InterPro" id="IPR015484">
    <property type="entry name" value="CD3_esu/gsu/dsu"/>
</dbReference>
<dbReference type="InterPro" id="IPR013783">
    <property type="entry name" value="Ig-like_fold"/>
</dbReference>
<dbReference type="InterPro" id="IPR003110">
    <property type="entry name" value="Phos_immunorcpt_sig_ITAM"/>
</dbReference>
<dbReference type="PANTHER" id="PTHR10570:SF9">
    <property type="entry name" value="T-CELL SURFACE GLYCOPROTEIN CD3 EPSILON CHAIN"/>
    <property type="match status" value="1"/>
</dbReference>
<dbReference type="PANTHER" id="PTHR10570">
    <property type="entry name" value="T-CELL SURFACE GLYCOPROTEIN CD3 GAMMA CHAIN / DELTA CHAIN"/>
    <property type="match status" value="1"/>
</dbReference>
<dbReference type="Pfam" id="PF16681">
    <property type="entry name" value="Ig_5"/>
    <property type="match status" value="1"/>
</dbReference>
<dbReference type="SMART" id="SM00077">
    <property type="entry name" value="ITAM"/>
    <property type="match status" value="1"/>
</dbReference>
<dbReference type="PROSITE" id="PS51055">
    <property type="entry name" value="ITAM_1"/>
    <property type="match status" value="1"/>
</dbReference>
<proteinExistence type="evidence at transcript level"/>
<reference key="1">
    <citation type="journal article" date="1997" name="Eur. J. Immunol.">
        <title>Identification and analysis of the chicken CD3epsilon gene.</title>
        <authorList>
            <person name="Gobel T.W.F."/>
            <person name="Fluri M."/>
        </authorList>
    </citation>
    <scope>NUCLEOTIDE SEQUENCE [MRNA]</scope>
    <source>
        <strain>CB</strain>
        <tissue>Blood</tissue>
    </source>
</reference>
<comment type="function">
    <text evidence="1">The CD3 complex mediates signal transduction, resulting in T-cell activation and proliferation. Required for normal immune responses.</text>
</comment>
<comment type="subunit">
    <text evidence="1">The TCR/CD3 complex of T-lymphocytes consists of either a TCR alpha/beta or TCR gamma/delta heterodimer coexpressed at the cell surface with the invariant subunits of CD3 labeled gamma, delta, epsilon, zeta, and eta.</text>
</comment>
<comment type="subcellular location">
    <subcellularLocation>
        <location evidence="1">Cell membrane</location>
        <topology evidence="1">Single-pass type I membrane protein</topology>
    </subcellularLocation>
</comment>
<gene>
    <name type="primary">CD3E</name>
</gene>
<evidence type="ECO:0000250" key="1">
    <source>
        <dbReference type="UniProtKB" id="P07766"/>
    </source>
</evidence>
<evidence type="ECO:0000255" key="2"/>
<evidence type="ECO:0000255" key="3">
    <source>
        <dbReference type="PROSITE-ProRule" id="PRU00379"/>
    </source>
</evidence>
<evidence type="ECO:0000256" key="4">
    <source>
        <dbReference type="SAM" id="MobiDB-lite"/>
    </source>
</evidence>
<accession>Q98910</accession>
<name>CD3E_CHICK</name>
<organism>
    <name type="scientific">Gallus gallus</name>
    <name type="common">Chicken</name>
    <dbReference type="NCBI Taxonomy" id="9031"/>
    <lineage>
        <taxon>Eukaryota</taxon>
        <taxon>Metazoa</taxon>
        <taxon>Chordata</taxon>
        <taxon>Craniata</taxon>
        <taxon>Vertebrata</taxon>
        <taxon>Euteleostomi</taxon>
        <taxon>Archelosauria</taxon>
        <taxon>Archosauria</taxon>
        <taxon>Dinosauria</taxon>
        <taxon>Saurischia</taxon>
        <taxon>Theropoda</taxon>
        <taxon>Coelurosauria</taxon>
        <taxon>Aves</taxon>
        <taxon>Neognathae</taxon>
        <taxon>Galloanserae</taxon>
        <taxon>Galliformes</taxon>
        <taxon>Phasianidae</taxon>
        <taxon>Phasianinae</taxon>
        <taxon>Gallus</taxon>
    </lineage>
</organism>
<sequence>MRCEVPLPLLGLLLCVVGAAAQGGQEEFAVEISGTTVTITCPSSGDDVKWKPDPKMVVNNKYIIQNHDSSPLTVSCTAGDEEHTMYLNAKVCANCEELDTFTVVGIIAADLLITLGVLILVYYFSKNKKGQSRAAAGSRPRAQKMRRPPPVPNPDYEPIRKGQRDVYAGLEHRGF</sequence>
<feature type="signal peptide" evidence="2">
    <location>
        <begin position="1"/>
        <end position="21"/>
    </location>
</feature>
<feature type="chain" id="PRO_0000014613" description="T-cell surface glycoprotein CD3 epsilon chain">
    <location>
        <begin position="22"/>
        <end position="175"/>
    </location>
</feature>
<feature type="topological domain" description="Extracellular" evidence="2">
    <location>
        <begin position="22"/>
        <end position="100"/>
    </location>
</feature>
<feature type="transmembrane region" description="Helical" evidence="2">
    <location>
        <begin position="101"/>
        <end position="121"/>
    </location>
</feature>
<feature type="topological domain" description="Cytoplasmic" evidence="2">
    <location>
        <begin position="122"/>
        <end position="175"/>
    </location>
</feature>
<feature type="domain" description="ITAM" evidence="3">
    <location>
        <begin position="146"/>
        <end position="173"/>
    </location>
</feature>
<feature type="region of interest" description="Disordered" evidence="4">
    <location>
        <begin position="133"/>
        <end position="163"/>
    </location>
</feature>
<protein>
    <recommendedName>
        <fullName>T-cell surface glycoprotein CD3 epsilon chain</fullName>
    </recommendedName>
    <cdAntigenName>CD3e</cdAntigenName>
</protein>